<keyword id="KW-0965">Cell junction</keyword>
<keyword id="KW-1003">Cell membrane</keyword>
<keyword id="KW-0963">Cytoplasm</keyword>
<keyword id="KW-0472">Membrane</keyword>
<keyword id="KW-0539">Nucleus</keyword>
<keyword id="KW-1185">Reference proteome</keyword>
<keyword id="KW-0677">Repeat</keyword>
<keyword id="KW-0808">Transferase</keyword>
<keyword id="KW-0832">Ubl conjugation</keyword>
<keyword id="KW-0833">Ubl conjugation pathway</keyword>
<feature type="chain" id="PRO_0000120337" description="NEDD4-like E3 ubiquitin-protein ligase WWP1">
    <location>
        <begin position="1"/>
        <end position="918"/>
    </location>
</feature>
<feature type="domain" description="C2" evidence="3">
    <location>
        <begin position="1"/>
        <end position="116"/>
    </location>
</feature>
<feature type="domain" description="WW 1" evidence="5">
    <location>
        <begin position="345"/>
        <end position="378"/>
    </location>
</feature>
<feature type="domain" description="WW 2" evidence="5">
    <location>
        <begin position="377"/>
        <end position="410"/>
    </location>
</feature>
<feature type="domain" description="WW 3" evidence="5">
    <location>
        <begin position="452"/>
        <end position="485"/>
    </location>
</feature>
<feature type="domain" description="WW 4" evidence="5">
    <location>
        <begin position="492"/>
        <end position="525"/>
    </location>
</feature>
<feature type="domain" description="HECT" evidence="4">
    <location>
        <begin position="584"/>
        <end position="918"/>
    </location>
</feature>
<feature type="region of interest" description="Disordered" evidence="6">
    <location>
        <begin position="150"/>
        <end position="182"/>
    </location>
</feature>
<feature type="region of interest" description="Disordered" evidence="6">
    <location>
        <begin position="209"/>
        <end position="360"/>
    </location>
</feature>
<feature type="region of interest" description="Required for interaction with and ubiquitination of AMOTL2. Required for interaction with YAP1" evidence="2">
    <location>
        <begin position="345"/>
        <end position="527"/>
    </location>
</feature>
<feature type="region of interest" description="Interaction with ERBB4" evidence="13">
    <location>
        <begin position="345"/>
        <end position="525"/>
    </location>
</feature>
<feature type="compositionally biased region" description="Polar residues" evidence="6">
    <location>
        <begin position="150"/>
        <end position="164"/>
    </location>
</feature>
<feature type="compositionally biased region" description="Polar residues" evidence="6">
    <location>
        <begin position="209"/>
        <end position="219"/>
    </location>
</feature>
<feature type="compositionally biased region" description="Polar residues" evidence="6">
    <location>
        <begin position="235"/>
        <end position="258"/>
    </location>
</feature>
<feature type="compositionally biased region" description="Low complexity" evidence="6">
    <location>
        <begin position="266"/>
        <end position="281"/>
    </location>
</feature>
<feature type="active site" description="Glycyl thioester intermediate" evidence="4">
    <location>
        <position position="886"/>
    </location>
</feature>
<feature type="site" description="Required for ubiquitin-thioester formation">
    <location>
        <position position="886"/>
    </location>
</feature>
<feature type="mutagenesis site" description="Loss of catalytic activity. No effect on RNF11-binding. No effect on KLF2 ubiquitination. Abolishes ubiquitination of KLF5." evidence="8 9 11">
    <original>C</original>
    <variation>S</variation>
    <location>
        <position position="886"/>
    </location>
</feature>
<feature type="sequence conflict" description="In Ref. 1; BAC28168." evidence="14" ref="1">
    <original>V</original>
    <variation>L</variation>
    <location>
        <position position="302"/>
    </location>
</feature>
<comment type="function">
    <text evidence="1 2 8 9 11 12 13">E3 ubiquitin-protein ligase which accepts ubiquitin from an E2 ubiquitin-conjugating enzyme in the form of a thioester and then directly transfers the ubiquitin to targeted substrates. Ubiquitinates and promotes degradation of SMAD2 in response to TGF-beta signaling, which requires interaction with TGIF (By similarity). Ubiquitinates ERBB4 isoforms JM-A CYT-1 and JM-B CYT-1, KLF2, KLF5 and TP63 and promotes their proteasomal degradation. Ubiquitinates RNF11 without targeting it for degradation. Ubiquitinates and promotes degradation of TGFBR1; the ubiquitination is enhanced by SMAD7. Ubiquitinates SMAD6 and SMAD7. Activates the Hippo signaling pathway in response to cell contact inhibition and recruitment to the Crumbs complex at the cell membrane (By similarity). Monoubiquitinates AMOTL2 which facilitates its interaction with and activation of LATS2 (By similarity). LATS2 then phosphorylates YAP1, excluding it from the nucleus and therefore ultimately represses YAP1-driven transcription of target genes (By similarity).</text>
</comment>
<comment type="catalytic activity">
    <reaction evidence="2">
        <text>S-ubiquitinyl-[E2 ubiquitin-conjugating enzyme]-L-cysteine + [acceptor protein]-L-lysine = [E2 ubiquitin-conjugating enzyme]-L-cysteine + N(6)-ubiquitinyl-[acceptor protein]-L-lysine.</text>
        <dbReference type="EC" id="2.3.2.26"/>
    </reaction>
</comment>
<comment type="activity regulation">
    <text evidence="1">Activated by NDFIP1- and NDFIP2-binding.</text>
</comment>
<comment type="pathway">
    <text>Protein modification; protein ubiquitination.</text>
</comment>
<comment type="subunit">
    <text evidence="1 2 7 9 10 11 12 13">Interacts with the Crumbs complex components PALS1 and PATJ; interaction with the Crumbs complex is enhanced by WWP1's interaction with AMOTL2 and facilitates WWP1 localization to the plasma membrane (By similarity). Interaction with the Crumbs complex promotes WWP1 monoubiquitination of AMOTL2, which activates the Hippo signaling pathway (By similarity). Binds SCNN1A, SCNN1B, SCNN1G, WBP1, WBP2, DRPLA and adenovirus type 2 PIII. Interacts with TGIF (By similarity). Binds KLF2 AND HIVEP3. Interacts with RNF11. Interacts with SPART. Interacts with NDFIP1 and NDFIP2; this interaction activates the E3 ubiquitin-protein ligase (By similarity). Interacts with ERBB4 isoforms JM-B CYT-1 and JM-A CYT-1. Does not interact with ERB4 isoform JMA-A CYT-2. Interacts with SMAD1, SMAD2, SMAD3, SMAD5, SMAD6, SMAD7, TGFBR1 and TGFBR2. Associates with the TGFBR1:TGFBR2 receptor complex in presence of SMAD7. Interacts with SKIL isoform 1. Interacts with TP63 isoform 1 and isoform 2. Interacts (via WW domains) with ARRDC1, ARRDC2 and ARRDC3 (By similarity).</text>
</comment>
<comment type="subcellular location">
    <subcellularLocation>
        <location evidence="9">Cytoplasm</location>
    </subcellularLocation>
    <subcellularLocation>
        <location evidence="9">Cell membrane</location>
        <topology evidence="9">Peripheral membrane protein</topology>
    </subcellularLocation>
    <subcellularLocation>
        <location evidence="9">Nucleus</location>
    </subcellularLocation>
    <subcellularLocation>
        <location evidence="2">Cell junction</location>
    </subcellularLocation>
    <text evidence="2">Translocates to the plasma membrane in response to increased cell-cell contact inhibition and subsequent interaction with the Crumbs complex.</text>
</comment>
<comment type="domain">
    <text evidence="2">The WW domains mediate interaction with PPxY motif-containing proteins.</text>
</comment>
<comment type="PTM">
    <text evidence="1">Auto-ubiquitinated and ubiquitinated by RNF11.</text>
</comment>
<comment type="sequence caution" evidence="14">
    <conflict type="erroneous initiation">
        <sequence resource="EMBL-CDS" id="AAH21470"/>
    </conflict>
</comment>
<comment type="sequence caution" evidence="14">
    <conflict type="miscellaneous discrepancy">
        <sequence resource="EMBL-CDS" id="BAC38473"/>
    </conflict>
    <text>Chimera. The second part of the clone maps to another chromosome.</text>
</comment>
<name>WWP1_MOUSE</name>
<organism>
    <name type="scientific">Mus musculus</name>
    <name type="common">Mouse</name>
    <dbReference type="NCBI Taxonomy" id="10090"/>
    <lineage>
        <taxon>Eukaryota</taxon>
        <taxon>Metazoa</taxon>
        <taxon>Chordata</taxon>
        <taxon>Craniata</taxon>
        <taxon>Vertebrata</taxon>
        <taxon>Euteleostomi</taxon>
        <taxon>Mammalia</taxon>
        <taxon>Eutheria</taxon>
        <taxon>Euarchontoglires</taxon>
        <taxon>Glires</taxon>
        <taxon>Rodentia</taxon>
        <taxon>Myomorpha</taxon>
        <taxon>Muroidea</taxon>
        <taxon>Muridae</taxon>
        <taxon>Murinae</taxon>
        <taxon>Mus</taxon>
        <taxon>Mus</taxon>
    </lineage>
</organism>
<accession>Q8BZZ3</accession>
<accession>Q8BIV9</accession>
<accession>Q8VDP8</accession>
<protein>
    <recommendedName>
        <fullName>NEDD4-like E3 ubiquitin-protein ligase WWP1</fullName>
        <ecNumber evidence="2">2.3.2.26</ecNumber>
    </recommendedName>
    <alternativeName>
        <fullName>HECT-type E3 ubiquitin transferase WWP1</fullName>
    </alternativeName>
    <alternativeName>
        <fullName>WW domain-containing protein 1</fullName>
    </alternativeName>
</protein>
<gene>
    <name type="primary">Wwp1</name>
</gene>
<proteinExistence type="evidence at protein level"/>
<reference key="1">
    <citation type="journal article" date="2005" name="Science">
        <title>The transcriptional landscape of the mammalian genome.</title>
        <authorList>
            <person name="Carninci P."/>
            <person name="Kasukawa T."/>
            <person name="Katayama S."/>
            <person name="Gough J."/>
            <person name="Frith M.C."/>
            <person name="Maeda N."/>
            <person name="Oyama R."/>
            <person name="Ravasi T."/>
            <person name="Lenhard B."/>
            <person name="Wells C."/>
            <person name="Kodzius R."/>
            <person name="Shimokawa K."/>
            <person name="Bajic V.B."/>
            <person name="Brenner S.E."/>
            <person name="Batalov S."/>
            <person name="Forrest A.R."/>
            <person name="Zavolan M."/>
            <person name="Davis M.J."/>
            <person name="Wilming L.G."/>
            <person name="Aidinis V."/>
            <person name="Allen J.E."/>
            <person name="Ambesi-Impiombato A."/>
            <person name="Apweiler R."/>
            <person name="Aturaliya R.N."/>
            <person name="Bailey T.L."/>
            <person name="Bansal M."/>
            <person name="Baxter L."/>
            <person name="Beisel K.W."/>
            <person name="Bersano T."/>
            <person name="Bono H."/>
            <person name="Chalk A.M."/>
            <person name="Chiu K.P."/>
            <person name="Choudhary V."/>
            <person name="Christoffels A."/>
            <person name="Clutterbuck D.R."/>
            <person name="Crowe M.L."/>
            <person name="Dalla E."/>
            <person name="Dalrymple B.P."/>
            <person name="de Bono B."/>
            <person name="Della Gatta G."/>
            <person name="di Bernardo D."/>
            <person name="Down T."/>
            <person name="Engstrom P."/>
            <person name="Fagiolini M."/>
            <person name="Faulkner G."/>
            <person name="Fletcher C.F."/>
            <person name="Fukushima T."/>
            <person name="Furuno M."/>
            <person name="Futaki S."/>
            <person name="Gariboldi M."/>
            <person name="Georgii-Hemming P."/>
            <person name="Gingeras T.R."/>
            <person name="Gojobori T."/>
            <person name="Green R.E."/>
            <person name="Gustincich S."/>
            <person name="Harbers M."/>
            <person name="Hayashi Y."/>
            <person name="Hensch T.K."/>
            <person name="Hirokawa N."/>
            <person name="Hill D."/>
            <person name="Huminiecki L."/>
            <person name="Iacono M."/>
            <person name="Ikeo K."/>
            <person name="Iwama A."/>
            <person name="Ishikawa T."/>
            <person name="Jakt M."/>
            <person name="Kanapin A."/>
            <person name="Katoh M."/>
            <person name="Kawasawa Y."/>
            <person name="Kelso J."/>
            <person name="Kitamura H."/>
            <person name="Kitano H."/>
            <person name="Kollias G."/>
            <person name="Krishnan S.P."/>
            <person name="Kruger A."/>
            <person name="Kummerfeld S.K."/>
            <person name="Kurochkin I.V."/>
            <person name="Lareau L.F."/>
            <person name="Lazarevic D."/>
            <person name="Lipovich L."/>
            <person name="Liu J."/>
            <person name="Liuni S."/>
            <person name="McWilliam S."/>
            <person name="Madan Babu M."/>
            <person name="Madera M."/>
            <person name="Marchionni L."/>
            <person name="Matsuda H."/>
            <person name="Matsuzawa S."/>
            <person name="Miki H."/>
            <person name="Mignone F."/>
            <person name="Miyake S."/>
            <person name="Morris K."/>
            <person name="Mottagui-Tabar S."/>
            <person name="Mulder N."/>
            <person name="Nakano N."/>
            <person name="Nakauchi H."/>
            <person name="Ng P."/>
            <person name="Nilsson R."/>
            <person name="Nishiguchi S."/>
            <person name="Nishikawa S."/>
            <person name="Nori F."/>
            <person name="Ohara O."/>
            <person name="Okazaki Y."/>
            <person name="Orlando V."/>
            <person name="Pang K.C."/>
            <person name="Pavan W.J."/>
            <person name="Pavesi G."/>
            <person name="Pesole G."/>
            <person name="Petrovsky N."/>
            <person name="Piazza S."/>
            <person name="Reed J."/>
            <person name="Reid J.F."/>
            <person name="Ring B.Z."/>
            <person name="Ringwald M."/>
            <person name="Rost B."/>
            <person name="Ruan Y."/>
            <person name="Salzberg S.L."/>
            <person name="Sandelin A."/>
            <person name="Schneider C."/>
            <person name="Schoenbach C."/>
            <person name="Sekiguchi K."/>
            <person name="Semple C.A."/>
            <person name="Seno S."/>
            <person name="Sessa L."/>
            <person name="Sheng Y."/>
            <person name="Shibata Y."/>
            <person name="Shimada H."/>
            <person name="Shimada K."/>
            <person name="Silva D."/>
            <person name="Sinclair B."/>
            <person name="Sperling S."/>
            <person name="Stupka E."/>
            <person name="Sugiura K."/>
            <person name="Sultana R."/>
            <person name="Takenaka Y."/>
            <person name="Taki K."/>
            <person name="Tammoja K."/>
            <person name="Tan S.L."/>
            <person name="Tang S."/>
            <person name="Taylor M.S."/>
            <person name="Tegner J."/>
            <person name="Teichmann S.A."/>
            <person name="Ueda H.R."/>
            <person name="van Nimwegen E."/>
            <person name="Verardo R."/>
            <person name="Wei C.L."/>
            <person name="Yagi K."/>
            <person name="Yamanishi H."/>
            <person name="Zabarovsky E."/>
            <person name="Zhu S."/>
            <person name="Zimmer A."/>
            <person name="Hide W."/>
            <person name="Bult C."/>
            <person name="Grimmond S.M."/>
            <person name="Teasdale R.D."/>
            <person name="Liu E.T."/>
            <person name="Brusic V."/>
            <person name="Quackenbush J."/>
            <person name="Wahlestedt C."/>
            <person name="Mattick J.S."/>
            <person name="Hume D.A."/>
            <person name="Kai C."/>
            <person name="Sasaki D."/>
            <person name="Tomaru Y."/>
            <person name="Fukuda S."/>
            <person name="Kanamori-Katayama M."/>
            <person name="Suzuki M."/>
            <person name="Aoki J."/>
            <person name="Arakawa T."/>
            <person name="Iida J."/>
            <person name="Imamura K."/>
            <person name="Itoh M."/>
            <person name="Kato T."/>
            <person name="Kawaji H."/>
            <person name="Kawagashira N."/>
            <person name="Kawashima T."/>
            <person name="Kojima M."/>
            <person name="Kondo S."/>
            <person name="Konno H."/>
            <person name="Nakano K."/>
            <person name="Ninomiya N."/>
            <person name="Nishio T."/>
            <person name="Okada M."/>
            <person name="Plessy C."/>
            <person name="Shibata K."/>
            <person name="Shiraki T."/>
            <person name="Suzuki S."/>
            <person name="Tagami M."/>
            <person name="Waki K."/>
            <person name="Watahiki A."/>
            <person name="Okamura-Oho Y."/>
            <person name="Suzuki H."/>
            <person name="Kawai J."/>
            <person name="Hayashizaki Y."/>
        </authorList>
    </citation>
    <scope>NUCLEOTIDE SEQUENCE [LARGE SCALE MRNA]</scope>
    <source>
        <strain>C57BL/6J</strain>
        <tissue>Testis</tissue>
    </source>
</reference>
<reference key="2">
    <citation type="journal article" date="2004" name="Genome Res.">
        <title>The status, quality, and expansion of the NIH full-length cDNA project: the Mammalian Gene Collection (MGC).</title>
        <authorList>
            <consortium name="The MGC Project Team"/>
        </authorList>
    </citation>
    <scope>NUCLEOTIDE SEQUENCE [LARGE SCALE MRNA] OF 639-918</scope>
    <source>
        <strain>FVB/N</strain>
        <tissue>Colon</tissue>
        <tissue>Mammary cancer</tissue>
    </source>
</reference>
<reference key="3">
    <citation type="journal article" date="2001" name="J. Biol. Chem.">
        <title>Lung Krueppel-like factor contains an autoinhibitory domain that regulates its transcriptional activation by binding WWP1, an E3 ubiquitin ligase.</title>
        <authorList>
            <person name="Conkright M.D."/>
            <person name="Wani M.A."/>
            <person name="Lingrel J.B."/>
        </authorList>
    </citation>
    <scope>INTERACTION WITH KLF2</scope>
</reference>
<reference key="4">
    <citation type="journal article" date="2004" name="Biochem. Biophys. Res. Commun.">
        <title>WWP1-dependent ubiquitination and degradation of the lung Kruppel-like factor, KLF2.</title>
        <authorList>
            <person name="Zhang X."/>
            <person name="Srinivasan S.V."/>
            <person name="Lingrel J.B."/>
        </authorList>
    </citation>
    <scope>FUNCTION IN UBIQUITINATION OF KLF2</scope>
    <scope>MUTAGENESIS OF CYS-886</scope>
</reference>
<reference key="5">
    <citation type="journal article" date="2005" name="Oncogene">
        <title>Ubiquitin-proteasome degradation of KLF5 transcription factor in cancer and untransformed epithelial cells.</title>
        <authorList>
            <person name="Chen C."/>
            <person name="Sun X."/>
            <person name="Ran Q."/>
            <person name="Wilkinson K.D."/>
            <person name="Murphy T.J."/>
            <person name="Simons J.W."/>
            <person name="Dong J.T."/>
        </authorList>
    </citation>
    <scope>FUNCTION IN UBIQUITINATION OF KLF5</scope>
    <scope>INTERACTION WITH KLF5</scope>
    <scope>SUBCELLULAR LOCATION</scope>
    <scope>MUTAGENESIS OF CYS-886</scope>
</reference>
<reference key="6">
    <citation type="journal article" date="2006" name="Science">
        <title>Regulation of adult bone mass by the zinc finger adapter protein Schnurri-3.</title>
        <authorList>
            <person name="Jones D.C."/>
            <person name="Wein M.N."/>
            <person name="Oukka M."/>
            <person name="Hofstaetter J.G."/>
            <person name="Glimcher M.J."/>
            <person name="Glimcher L.H."/>
        </authorList>
    </citation>
    <scope>INTERACTION WITH HIVEP3</scope>
</reference>
<reference key="7">
    <citation type="journal article" date="2008" name="Cell Death Differ.">
        <title>WW domain-containing E3 ubiquitin protein ligase 1 targets p63 transcription factor for ubiquitin-mediated proteasomal degradation and regulates apoptosis.</title>
        <authorList>
            <person name="Li Y."/>
            <person name="Zhou Z."/>
            <person name="Chen C."/>
        </authorList>
    </citation>
    <scope>FUNCTION IN UBIQUITINATION OF TP63</scope>
    <scope>INTERACTION WITH TP63</scope>
</reference>
<reference key="8">
    <citation type="journal article" date="2008" name="Oncogene">
        <title>The WW domain containing E3 ubiquitin protein ligase 1 upregulates ErbB2 and EGFR through RING finger protein 11.</title>
        <authorList>
            <person name="Chen C."/>
            <person name="Zhou Z."/>
            <person name="Liu R."/>
            <person name="Li Y."/>
            <person name="Azmi P.B."/>
            <person name="Seth A.K."/>
        </authorList>
    </citation>
    <scope>FUNCTION IN UBIQUITINATION OF RNF11</scope>
    <scope>INTERACTION WITH RNF11</scope>
    <scope>UBIQUITINATION</scope>
    <scope>MUTAGENESIS OF CYS-886</scope>
</reference>
<reference key="9">
    <citation type="journal article" date="2009" name="Immunity">
        <title>The phagosomal proteome in interferon-gamma-activated macrophages.</title>
        <authorList>
            <person name="Trost M."/>
            <person name="English L."/>
            <person name="Lemieux S."/>
            <person name="Courcelles M."/>
            <person name="Desjardins M."/>
            <person name="Thibault P."/>
        </authorList>
    </citation>
    <scope>IDENTIFICATION BY MASS SPECTROMETRY [LARGE SCALE ANALYSIS]</scope>
</reference>
<reference key="10">
    <citation type="journal article" date="2009" name="Oncogene">
        <title>WW domain containing E3 ubiquitin protein ligase 1 targets the full-length ErbB4 for ubiquitin-mediated degradation in breast cancer.</title>
        <authorList>
            <person name="Li Y."/>
            <person name="Zhou Z."/>
            <person name="Alimandi M."/>
            <person name="Chen C."/>
        </authorList>
    </citation>
    <scope>FUNCTION IN UBIQUITINATION OF ERBB4</scope>
    <scope>INTERACTION WITH ERBB4</scope>
</reference>
<sequence>MATASPRSDTSDIHSGRLQLKVTVSSAKLKRKKNWFGTAIYTEVIVDGEVKKTAKSSSSSNPKWDEQLIVNVTPQTTLEFRVWSHHTLKADALLGKATVDLKQVLLTHNRKLEKVKEQLKLSLENKNGIVQTGELTVVLDGLVIEQEPVTNRSSSPPIEIQQNGDALHENGDPATRTTPRLPVEGTIGIDNHVSTNTVVPNSCCSHVVNGENTPSSPSQVAARPKNAPAPKPVTSAPTSDTVNGESSSVLADNTSTMGTLLPSEDTTSTSNCTSTTTQEPPVQEPPASSEHSECIPSASAEVGPEARSLIDPDSDSRNNSVFDKVRQPEGCVEPLRPQSGNTNTEALPSGWEQRKDPHGRTYYVDHNTRTTTWERPQPLPPGWERRVDDRGRVYYVDHNTRTTTWQRPTMESVRNFEQWQSQRNQLQGAMQQFNQRYLYSASMLAAENDPYGPLPPGWEKRVDSTDRVYFVNHNTKTTQWEDPRTQGLPNEEPLPEGWEIRYTREGVRYFVDHNTRTTTFKDPRNGKSSVTKGGPQIAYERSFRWKLAHFRYLCQSNALPSHVKINVSRQTLFEDSFQQIMALKPYDLRRRLYVIFRGEEGLDYGGLAREWFFLLSHEVLNPMYCLFEYAGKNNYCLQINPASTINPDHLSYFCFIGRFIAMALFHGKFIDTGFSLPFYKRMLSKKLTIKDLESIDTEFYNSLIWIRDNNIEECGLEMYFSVDMEILGKVTSHDLKLGGSNILVTEENKDEYIGLMTEWRFSRGVQEQTKAFLDGFNEVVPLQWLQYFDEKELEVMLCGMQEVDLADWQRNTVYRHYTRNSKQIIWFWQFVKETDNEVRMRLLQFVTGTCRLPLGGFAELMGSNGPQKFCIEKVGKDTWLPRSHTCFNRLDLPPYKSYEQLKEKLLFAIEETEGFGQE</sequence>
<dbReference type="EC" id="2.3.2.26" evidence="2"/>
<dbReference type="EMBL" id="AK033138">
    <property type="protein sequence ID" value="BAC28168.1"/>
    <property type="molecule type" value="mRNA"/>
</dbReference>
<dbReference type="EMBL" id="AK082346">
    <property type="protein sequence ID" value="BAC38473.1"/>
    <property type="status" value="ALT_SEQ"/>
    <property type="molecule type" value="mRNA"/>
</dbReference>
<dbReference type="EMBL" id="BC021470">
    <property type="protein sequence ID" value="AAH21470.1"/>
    <property type="status" value="ALT_INIT"/>
    <property type="molecule type" value="mRNA"/>
</dbReference>
<dbReference type="EMBL" id="BC051405">
    <property type="protein sequence ID" value="AAH51405.1"/>
    <property type="molecule type" value="mRNA"/>
</dbReference>
<dbReference type="CCDS" id="CCDS38697.1"/>
<dbReference type="RefSeq" id="NP_001263221.1">
    <property type="nucleotide sequence ID" value="NM_001276292.1"/>
</dbReference>
<dbReference type="RefSeq" id="NP_796301.2">
    <property type="nucleotide sequence ID" value="NM_177327.5"/>
</dbReference>
<dbReference type="SMR" id="Q8BZZ3"/>
<dbReference type="BioGRID" id="223399">
    <property type="interactions" value="8"/>
</dbReference>
<dbReference type="FunCoup" id="Q8BZZ3">
    <property type="interactions" value="2541"/>
</dbReference>
<dbReference type="IntAct" id="Q8BZZ3">
    <property type="interactions" value="2"/>
</dbReference>
<dbReference type="STRING" id="10090.ENSMUSP00000103881"/>
<dbReference type="iPTMnet" id="Q8BZZ3"/>
<dbReference type="PhosphoSitePlus" id="Q8BZZ3"/>
<dbReference type="SwissPalm" id="Q8BZZ3"/>
<dbReference type="jPOST" id="Q8BZZ3"/>
<dbReference type="PaxDb" id="10090-ENSMUSP00000103881"/>
<dbReference type="ProteomicsDB" id="275222"/>
<dbReference type="Pumba" id="Q8BZZ3"/>
<dbReference type="Antibodypedia" id="25465">
    <property type="antibodies" value="160 antibodies from 28 providers"/>
</dbReference>
<dbReference type="DNASU" id="107568"/>
<dbReference type="Ensembl" id="ENSMUST00000035982.8">
    <property type="protein sequence ID" value="ENSMUSP00000041627.8"/>
    <property type="gene ID" value="ENSMUSG00000041058.16"/>
</dbReference>
<dbReference type="Ensembl" id="ENSMUST00000108246.9">
    <property type="protein sequence ID" value="ENSMUSP00000103881.3"/>
    <property type="gene ID" value="ENSMUSG00000041058.16"/>
</dbReference>
<dbReference type="GeneID" id="107568"/>
<dbReference type="KEGG" id="mmu:107568"/>
<dbReference type="UCSC" id="uc008scc.2">
    <property type="organism name" value="mouse"/>
</dbReference>
<dbReference type="AGR" id="MGI:1861728"/>
<dbReference type="CTD" id="11059"/>
<dbReference type="MGI" id="MGI:1861728">
    <property type="gene designation" value="Wwp1"/>
</dbReference>
<dbReference type="VEuPathDB" id="HostDB:ENSMUSG00000041058"/>
<dbReference type="eggNOG" id="KOG0940">
    <property type="taxonomic scope" value="Eukaryota"/>
</dbReference>
<dbReference type="GeneTree" id="ENSGT00940000154635"/>
<dbReference type="HOGENOM" id="CLU_002173_0_1_1"/>
<dbReference type="InParanoid" id="Q8BZZ3"/>
<dbReference type="OMA" id="NMAIEMT"/>
<dbReference type="OrthoDB" id="423283at2759"/>
<dbReference type="PhylomeDB" id="Q8BZZ3"/>
<dbReference type="TreeFam" id="TF323658"/>
<dbReference type="Reactome" id="R-MMU-1253288">
    <property type="pathway name" value="Downregulation of ERBB4 signaling"/>
</dbReference>
<dbReference type="Reactome" id="R-MMU-2672351">
    <property type="pathway name" value="Stimuli-sensing channels"/>
</dbReference>
<dbReference type="Reactome" id="R-MMU-983168">
    <property type="pathway name" value="Antigen processing: Ubiquitination &amp; Proteasome degradation"/>
</dbReference>
<dbReference type="UniPathway" id="UPA00143"/>
<dbReference type="BioGRID-ORCS" id="107568">
    <property type="hits" value="3 hits in 78 CRISPR screens"/>
</dbReference>
<dbReference type="CD-CODE" id="CE726F99">
    <property type="entry name" value="Postsynaptic density"/>
</dbReference>
<dbReference type="ChiTaRS" id="Wwp1">
    <property type="organism name" value="mouse"/>
</dbReference>
<dbReference type="PRO" id="PR:Q8BZZ3"/>
<dbReference type="Proteomes" id="UP000000589">
    <property type="component" value="Chromosome 4"/>
</dbReference>
<dbReference type="RNAct" id="Q8BZZ3">
    <property type="molecule type" value="protein"/>
</dbReference>
<dbReference type="Bgee" id="ENSMUSG00000041058">
    <property type="expression patterns" value="Expressed in stroma of bone marrow and 244 other cell types or tissues"/>
</dbReference>
<dbReference type="GO" id="GO:0070161">
    <property type="term" value="C:anchoring junction"/>
    <property type="evidence" value="ECO:0007669"/>
    <property type="project" value="UniProtKB-SubCell"/>
</dbReference>
<dbReference type="GO" id="GO:0005829">
    <property type="term" value="C:cytosol"/>
    <property type="evidence" value="ECO:0000304"/>
    <property type="project" value="Reactome"/>
</dbReference>
<dbReference type="GO" id="GO:0005634">
    <property type="term" value="C:nucleus"/>
    <property type="evidence" value="ECO:0007669"/>
    <property type="project" value="UniProtKB-SubCell"/>
</dbReference>
<dbReference type="GO" id="GO:0005886">
    <property type="term" value="C:plasma membrane"/>
    <property type="evidence" value="ECO:0007669"/>
    <property type="project" value="UniProtKB-SubCell"/>
</dbReference>
<dbReference type="GO" id="GO:0061630">
    <property type="term" value="F:ubiquitin protein ligase activity"/>
    <property type="evidence" value="ECO:0000314"/>
    <property type="project" value="MGI"/>
</dbReference>
<dbReference type="GO" id="GO:0004842">
    <property type="term" value="F:ubiquitin-protein transferase activity"/>
    <property type="evidence" value="ECO:0000314"/>
    <property type="project" value="UniProtKB"/>
</dbReference>
<dbReference type="GO" id="GO:0030324">
    <property type="term" value="P:lung development"/>
    <property type="evidence" value="ECO:0000304"/>
    <property type="project" value="UniProtKB"/>
</dbReference>
<dbReference type="GO" id="GO:0045892">
    <property type="term" value="P:negative regulation of DNA-templated transcription"/>
    <property type="evidence" value="ECO:0000314"/>
    <property type="project" value="UniProtKB"/>
</dbReference>
<dbReference type="GO" id="GO:0043161">
    <property type="term" value="P:proteasome-mediated ubiquitin-dependent protein catabolic process"/>
    <property type="evidence" value="ECO:0000315"/>
    <property type="project" value="UniProtKB"/>
</dbReference>
<dbReference type="GO" id="GO:0016567">
    <property type="term" value="P:protein ubiquitination"/>
    <property type="evidence" value="ECO:0000314"/>
    <property type="project" value="UniProtKB"/>
</dbReference>
<dbReference type="GO" id="GO:0030217">
    <property type="term" value="P:T cell differentiation"/>
    <property type="evidence" value="ECO:0000304"/>
    <property type="project" value="UniProtKB"/>
</dbReference>
<dbReference type="CDD" id="cd04021">
    <property type="entry name" value="C2_E3_ubiquitin_ligase"/>
    <property type="match status" value="1"/>
</dbReference>
<dbReference type="CDD" id="cd00078">
    <property type="entry name" value="HECTc"/>
    <property type="match status" value="1"/>
</dbReference>
<dbReference type="CDD" id="cd00201">
    <property type="entry name" value="WW"/>
    <property type="match status" value="4"/>
</dbReference>
<dbReference type="FunFam" id="2.20.70.10:FF:000005">
    <property type="entry name" value="E3 ubiquitin-protein ligase"/>
    <property type="match status" value="1"/>
</dbReference>
<dbReference type="FunFam" id="2.20.70.10:FF:000009">
    <property type="entry name" value="E3 ubiquitin-protein ligase"/>
    <property type="match status" value="1"/>
</dbReference>
<dbReference type="FunFam" id="2.60.40.150:FF:000122">
    <property type="entry name" value="E3 ubiquitin-protein ligase"/>
    <property type="match status" value="1"/>
</dbReference>
<dbReference type="FunFam" id="3.30.2160.10:FF:000003">
    <property type="entry name" value="E3 ubiquitin-protein ligase"/>
    <property type="match status" value="1"/>
</dbReference>
<dbReference type="FunFam" id="3.90.1750.10:FF:000002">
    <property type="entry name" value="E3 ubiquitin-protein ligase"/>
    <property type="match status" value="1"/>
</dbReference>
<dbReference type="FunFam" id="3.90.1750.10:FF:000026">
    <property type="entry name" value="E3 ubiquitin-protein ligase HACE1"/>
    <property type="match status" value="1"/>
</dbReference>
<dbReference type="FunFam" id="3.30.2410.10:FF:000002">
    <property type="entry name" value="E3 ubiquitin-protein ligase HECW2"/>
    <property type="match status" value="1"/>
</dbReference>
<dbReference type="FunFam" id="2.20.70.10:FF:000086">
    <property type="entry name" value="NEDD4-like E3 ubiquitin-protein ligase WWP1"/>
    <property type="match status" value="1"/>
</dbReference>
<dbReference type="Gene3D" id="2.20.70.10">
    <property type="match status" value="3"/>
</dbReference>
<dbReference type="Gene3D" id="2.60.40.150">
    <property type="entry name" value="C2 domain"/>
    <property type="match status" value="1"/>
</dbReference>
<dbReference type="Gene3D" id="3.30.2160.10">
    <property type="entry name" value="Hect, E3 ligase catalytic domain"/>
    <property type="match status" value="1"/>
</dbReference>
<dbReference type="Gene3D" id="3.30.2410.10">
    <property type="entry name" value="Hect, E3 ligase catalytic domain"/>
    <property type="match status" value="1"/>
</dbReference>
<dbReference type="Gene3D" id="3.90.1750.10">
    <property type="entry name" value="Hect, E3 ligase catalytic domains"/>
    <property type="match status" value="1"/>
</dbReference>
<dbReference type="InterPro" id="IPR000008">
    <property type="entry name" value="C2_dom"/>
</dbReference>
<dbReference type="InterPro" id="IPR035892">
    <property type="entry name" value="C2_domain_sf"/>
</dbReference>
<dbReference type="InterPro" id="IPR024928">
    <property type="entry name" value="E3_ub_ligase_SMURF1"/>
</dbReference>
<dbReference type="InterPro" id="IPR050409">
    <property type="entry name" value="E3_ubiq-protein_ligase"/>
</dbReference>
<dbReference type="InterPro" id="IPR000569">
    <property type="entry name" value="HECT_dom"/>
</dbReference>
<dbReference type="InterPro" id="IPR035983">
    <property type="entry name" value="Hect_E3_ubiquitin_ligase"/>
</dbReference>
<dbReference type="InterPro" id="IPR001202">
    <property type="entry name" value="WW_dom"/>
</dbReference>
<dbReference type="InterPro" id="IPR036020">
    <property type="entry name" value="WW_dom_sf"/>
</dbReference>
<dbReference type="PANTHER" id="PTHR11254">
    <property type="entry name" value="HECT DOMAIN UBIQUITIN-PROTEIN LIGASE"/>
    <property type="match status" value="1"/>
</dbReference>
<dbReference type="PANTHER" id="PTHR11254:SF299">
    <property type="entry name" value="NEDD4-LIKE E3 UBIQUITIN-PROTEIN LIGASE WWP1"/>
    <property type="match status" value="1"/>
</dbReference>
<dbReference type="Pfam" id="PF00168">
    <property type="entry name" value="C2"/>
    <property type="match status" value="1"/>
</dbReference>
<dbReference type="Pfam" id="PF00632">
    <property type="entry name" value="HECT"/>
    <property type="match status" value="1"/>
</dbReference>
<dbReference type="Pfam" id="PF00397">
    <property type="entry name" value="WW"/>
    <property type="match status" value="4"/>
</dbReference>
<dbReference type="PIRSF" id="PIRSF001569">
    <property type="entry name" value="E3_ub_ligase_SMURF1"/>
    <property type="match status" value="1"/>
</dbReference>
<dbReference type="SMART" id="SM00239">
    <property type="entry name" value="C2"/>
    <property type="match status" value="1"/>
</dbReference>
<dbReference type="SMART" id="SM00119">
    <property type="entry name" value="HECTc"/>
    <property type="match status" value="1"/>
</dbReference>
<dbReference type="SMART" id="SM00456">
    <property type="entry name" value="WW"/>
    <property type="match status" value="4"/>
</dbReference>
<dbReference type="SUPFAM" id="SSF49562">
    <property type="entry name" value="C2 domain (Calcium/lipid-binding domain, CaLB)"/>
    <property type="match status" value="1"/>
</dbReference>
<dbReference type="SUPFAM" id="SSF56204">
    <property type="entry name" value="Hect, E3 ligase catalytic domain"/>
    <property type="match status" value="1"/>
</dbReference>
<dbReference type="SUPFAM" id="SSF51045">
    <property type="entry name" value="WW domain"/>
    <property type="match status" value="4"/>
</dbReference>
<dbReference type="PROSITE" id="PS50004">
    <property type="entry name" value="C2"/>
    <property type="match status" value="1"/>
</dbReference>
<dbReference type="PROSITE" id="PS50237">
    <property type="entry name" value="HECT"/>
    <property type="match status" value="1"/>
</dbReference>
<dbReference type="PROSITE" id="PS01159">
    <property type="entry name" value="WW_DOMAIN_1"/>
    <property type="match status" value="4"/>
</dbReference>
<dbReference type="PROSITE" id="PS50020">
    <property type="entry name" value="WW_DOMAIN_2"/>
    <property type="match status" value="4"/>
</dbReference>
<evidence type="ECO:0000250" key="1"/>
<evidence type="ECO:0000250" key="2">
    <source>
        <dbReference type="UniProtKB" id="Q9H0M0"/>
    </source>
</evidence>
<evidence type="ECO:0000255" key="3">
    <source>
        <dbReference type="PROSITE-ProRule" id="PRU00041"/>
    </source>
</evidence>
<evidence type="ECO:0000255" key="4">
    <source>
        <dbReference type="PROSITE-ProRule" id="PRU00104"/>
    </source>
</evidence>
<evidence type="ECO:0000255" key="5">
    <source>
        <dbReference type="PROSITE-ProRule" id="PRU00224"/>
    </source>
</evidence>
<evidence type="ECO:0000256" key="6">
    <source>
        <dbReference type="SAM" id="MobiDB-lite"/>
    </source>
</evidence>
<evidence type="ECO:0000269" key="7">
    <source>
    </source>
</evidence>
<evidence type="ECO:0000269" key="8">
    <source>
    </source>
</evidence>
<evidence type="ECO:0000269" key="9">
    <source>
    </source>
</evidence>
<evidence type="ECO:0000269" key="10">
    <source>
    </source>
</evidence>
<evidence type="ECO:0000269" key="11">
    <source>
    </source>
</evidence>
<evidence type="ECO:0000269" key="12">
    <source>
    </source>
</evidence>
<evidence type="ECO:0000269" key="13">
    <source>
    </source>
</evidence>
<evidence type="ECO:0000305" key="14"/>